<comment type="function">
    <text evidence="1">Required for maturation of 30S ribosomal subunits.</text>
</comment>
<comment type="subcellular location">
    <subcellularLocation>
        <location evidence="1">Cytoplasm</location>
    </subcellularLocation>
</comment>
<comment type="similarity">
    <text evidence="1">Belongs to the RimP family.</text>
</comment>
<gene>
    <name evidence="1" type="primary">rimP</name>
    <name type="ordered locus">Gura_1898</name>
</gene>
<evidence type="ECO:0000255" key="1">
    <source>
        <dbReference type="HAMAP-Rule" id="MF_01077"/>
    </source>
</evidence>
<accession>A5GF83</accession>
<organism>
    <name type="scientific">Geotalea uraniireducens (strain Rf4)</name>
    <name type="common">Geobacter uraniireducens</name>
    <dbReference type="NCBI Taxonomy" id="351605"/>
    <lineage>
        <taxon>Bacteria</taxon>
        <taxon>Pseudomonadati</taxon>
        <taxon>Thermodesulfobacteriota</taxon>
        <taxon>Desulfuromonadia</taxon>
        <taxon>Geobacterales</taxon>
        <taxon>Geobacteraceae</taxon>
        <taxon>Geotalea</taxon>
    </lineage>
</organism>
<reference key="1">
    <citation type="submission" date="2007-05" db="EMBL/GenBank/DDBJ databases">
        <title>Complete sequence of Geobacter uraniireducens Rf4.</title>
        <authorList>
            <consortium name="US DOE Joint Genome Institute"/>
            <person name="Copeland A."/>
            <person name="Lucas S."/>
            <person name="Lapidus A."/>
            <person name="Barry K."/>
            <person name="Detter J.C."/>
            <person name="Glavina del Rio T."/>
            <person name="Hammon N."/>
            <person name="Israni S."/>
            <person name="Dalin E."/>
            <person name="Tice H."/>
            <person name="Pitluck S."/>
            <person name="Chertkov O."/>
            <person name="Brettin T."/>
            <person name="Bruce D."/>
            <person name="Han C."/>
            <person name="Schmutz J."/>
            <person name="Larimer F."/>
            <person name="Land M."/>
            <person name="Hauser L."/>
            <person name="Kyrpides N."/>
            <person name="Mikhailova N."/>
            <person name="Shelobolina E."/>
            <person name="Aklujkar M."/>
            <person name="Lovley D."/>
            <person name="Richardson P."/>
        </authorList>
    </citation>
    <scope>NUCLEOTIDE SEQUENCE [LARGE SCALE GENOMIC DNA]</scope>
    <source>
        <strain>ATCC BAA-1134 / JCM 13001 / Rf4</strain>
    </source>
</reference>
<sequence length="159" mass="17796">MAKVDVISRVTVLAEQVISSLGMELVDLEYKREGREMVLRLFVDKEGGVNLDDCASVSRELSEVLDVEDVISEHYSLEVSSPGIDRPLKKVEDFQRFKGRLVKIRTFEPLPDDAGNKRKTFLGELKGIENGVVLVALKEGQNAAIPFEKVAKANLEFEF</sequence>
<feature type="chain" id="PRO_1000084526" description="Ribosome maturation factor RimP">
    <location>
        <begin position="1"/>
        <end position="159"/>
    </location>
</feature>
<dbReference type="EMBL" id="CP000698">
    <property type="protein sequence ID" value="ABQ26088.1"/>
    <property type="molecule type" value="Genomic_DNA"/>
</dbReference>
<dbReference type="RefSeq" id="WP_011938791.1">
    <property type="nucleotide sequence ID" value="NC_009483.1"/>
</dbReference>
<dbReference type="SMR" id="A5GF83"/>
<dbReference type="STRING" id="351605.Gura_1898"/>
<dbReference type="KEGG" id="gur:Gura_1898"/>
<dbReference type="HOGENOM" id="CLU_070525_2_2_7"/>
<dbReference type="OrthoDB" id="9805006at2"/>
<dbReference type="Proteomes" id="UP000006695">
    <property type="component" value="Chromosome"/>
</dbReference>
<dbReference type="GO" id="GO:0005829">
    <property type="term" value="C:cytosol"/>
    <property type="evidence" value="ECO:0007669"/>
    <property type="project" value="TreeGrafter"/>
</dbReference>
<dbReference type="GO" id="GO:0000028">
    <property type="term" value="P:ribosomal small subunit assembly"/>
    <property type="evidence" value="ECO:0007669"/>
    <property type="project" value="TreeGrafter"/>
</dbReference>
<dbReference type="GO" id="GO:0006412">
    <property type="term" value="P:translation"/>
    <property type="evidence" value="ECO:0007669"/>
    <property type="project" value="TreeGrafter"/>
</dbReference>
<dbReference type="CDD" id="cd01734">
    <property type="entry name" value="YlxS_C"/>
    <property type="match status" value="1"/>
</dbReference>
<dbReference type="FunFam" id="3.30.300.70:FF:000001">
    <property type="entry name" value="Ribosome maturation factor RimP"/>
    <property type="match status" value="1"/>
</dbReference>
<dbReference type="Gene3D" id="2.30.30.180">
    <property type="entry name" value="Ribosome maturation factor RimP, C-terminal domain"/>
    <property type="match status" value="1"/>
</dbReference>
<dbReference type="Gene3D" id="3.30.300.70">
    <property type="entry name" value="RimP-like superfamily, N-terminal"/>
    <property type="match status" value="1"/>
</dbReference>
<dbReference type="HAMAP" id="MF_01077">
    <property type="entry name" value="RimP"/>
    <property type="match status" value="1"/>
</dbReference>
<dbReference type="InterPro" id="IPR003728">
    <property type="entry name" value="Ribosome_maturation_RimP"/>
</dbReference>
<dbReference type="InterPro" id="IPR028998">
    <property type="entry name" value="RimP_C"/>
</dbReference>
<dbReference type="InterPro" id="IPR036847">
    <property type="entry name" value="RimP_C_sf"/>
</dbReference>
<dbReference type="InterPro" id="IPR028989">
    <property type="entry name" value="RimP_N"/>
</dbReference>
<dbReference type="InterPro" id="IPR035956">
    <property type="entry name" value="RimP_N_sf"/>
</dbReference>
<dbReference type="NCBIfam" id="NF011241">
    <property type="entry name" value="PRK14647.1"/>
    <property type="match status" value="1"/>
</dbReference>
<dbReference type="PANTHER" id="PTHR33867">
    <property type="entry name" value="RIBOSOME MATURATION FACTOR RIMP"/>
    <property type="match status" value="1"/>
</dbReference>
<dbReference type="PANTHER" id="PTHR33867:SF1">
    <property type="entry name" value="RIBOSOME MATURATION FACTOR RIMP"/>
    <property type="match status" value="1"/>
</dbReference>
<dbReference type="Pfam" id="PF17384">
    <property type="entry name" value="DUF150_C"/>
    <property type="match status" value="1"/>
</dbReference>
<dbReference type="Pfam" id="PF02576">
    <property type="entry name" value="RimP_N"/>
    <property type="match status" value="1"/>
</dbReference>
<dbReference type="SUPFAM" id="SSF74942">
    <property type="entry name" value="YhbC-like, C-terminal domain"/>
    <property type="match status" value="1"/>
</dbReference>
<dbReference type="SUPFAM" id="SSF75420">
    <property type="entry name" value="YhbC-like, N-terminal domain"/>
    <property type="match status" value="1"/>
</dbReference>
<protein>
    <recommendedName>
        <fullName evidence="1">Ribosome maturation factor RimP</fullName>
    </recommendedName>
</protein>
<name>RIMP_GEOUR</name>
<keyword id="KW-0963">Cytoplasm</keyword>
<keyword id="KW-1185">Reference proteome</keyword>
<keyword id="KW-0690">Ribosome biogenesis</keyword>
<proteinExistence type="inferred from homology"/>